<proteinExistence type="inferred from homology"/>
<evidence type="ECO:0000250" key="1"/>
<evidence type="ECO:0000255" key="2"/>
<evidence type="ECO:0000305" key="3"/>
<protein>
    <recommendedName>
        <fullName>Arginine/agmatine antiporter</fullName>
    </recommendedName>
</protein>
<accession>O84379</accession>
<organism>
    <name type="scientific">Chlamydia trachomatis serovar D (strain ATCC VR-885 / DSM 19411 / UW-3/Cx)</name>
    <dbReference type="NCBI Taxonomy" id="272561"/>
    <lineage>
        <taxon>Bacteria</taxon>
        <taxon>Pseudomonadati</taxon>
        <taxon>Chlamydiota</taxon>
        <taxon>Chlamydiia</taxon>
        <taxon>Chlamydiales</taxon>
        <taxon>Chlamydiaceae</taxon>
        <taxon>Chlamydia/Chlamydophila group</taxon>
        <taxon>Chlamydia</taxon>
    </lineage>
</organism>
<sequence>MLLKKRSPTSILGTLALTGIVISSMIGGGIFSLPQNMVASASAGAVMLAWMLSGIGIFFIANTFKTLSIIRPDLKAGIYTYSREGFGPYVGFTIAWGYWLCQIFGNVDYAVITMDALNYFFPPYFAGGNTIPAILLGSLLIWIFNYIVLRGIRQASFVNIIGAVCTLIPLLLFILITARFFKFSIFKTDFWGTAPQHTLGSIGSQLKSTMLVTLWAFIGIEGAVVISGRAANLSSVGKATILGFSGCLLIYVLLSLLPFGSLFQYQLAKIADPSTAGVLNILVGKWGEVLMNTGLLIAVLTSWLSWTILASEIPYAAAKNGTFPECFAIENSKHAPSFSLFMTSGLMQITMLLVYFSSNAWNTMLEITGVMVLPAYLTSSLFLVKFSLSKKYPKQAAIKARIAMITSLLGSLYSLWLIYAGGLQHLFMVAILLALGIPFYVDSGIRHKQEKTFLNRKEILKMTIVALAALLAIFLFSANKIHL</sequence>
<gene>
    <name type="primary">aaxC</name>
    <name type="synonym">arcD</name>
    <name type="ordered locus">CT_374</name>
</gene>
<keyword id="KW-0029">Amino-acid transport</keyword>
<keyword id="KW-0050">Antiport</keyword>
<keyword id="KW-0997">Cell inner membrane</keyword>
<keyword id="KW-1003">Cell membrane</keyword>
<keyword id="KW-0472">Membrane</keyword>
<keyword id="KW-1185">Reference proteome</keyword>
<keyword id="KW-0812">Transmembrane</keyword>
<keyword id="KW-1133">Transmembrane helix</keyword>
<keyword id="KW-0813">Transport</keyword>
<keyword id="KW-0843">Virulence</keyword>
<name>AAXC_CHLTR</name>
<dbReference type="EMBL" id="AE001273">
    <property type="protein sequence ID" value="AAC67970.1"/>
    <property type="molecule type" value="Genomic_DNA"/>
</dbReference>
<dbReference type="PIR" id="G71523">
    <property type="entry name" value="G71523"/>
</dbReference>
<dbReference type="RefSeq" id="NP_219883.1">
    <property type="nucleotide sequence ID" value="NC_000117.1"/>
</dbReference>
<dbReference type="RefSeq" id="WP_009873122.1">
    <property type="nucleotide sequence ID" value="NC_000117.1"/>
</dbReference>
<dbReference type="SMR" id="O84379"/>
<dbReference type="FunCoup" id="O84379">
    <property type="interactions" value="4"/>
</dbReference>
<dbReference type="STRING" id="272561.CT_374"/>
<dbReference type="EnsemblBacteria" id="AAC67970">
    <property type="protein sequence ID" value="AAC67970"/>
    <property type="gene ID" value="CT_374"/>
</dbReference>
<dbReference type="GeneID" id="884744"/>
<dbReference type="KEGG" id="ctr:CT_374"/>
<dbReference type="PATRIC" id="fig|272561.5.peg.403"/>
<dbReference type="HOGENOM" id="CLU_007946_1_2_0"/>
<dbReference type="InParanoid" id="O84379"/>
<dbReference type="OrthoDB" id="178667at2"/>
<dbReference type="Proteomes" id="UP000000431">
    <property type="component" value="Chromosome"/>
</dbReference>
<dbReference type="GO" id="GO:0005886">
    <property type="term" value="C:plasma membrane"/>
    <property type="evidence" value="ECO:0007669"/>
    <property type="project" value="UniProtKB-SubCell"/>
</dbReference>
<dbReference type="GO" id="GO:0015297">
    <property type="term" value="F:antiporter activity"/>
    <property type="evidence" value="ECO:0007669"/>
    <property type="project" value="UniProtKB-KW"/>
</dbReference>
<dbReference type="GO" id="GO:0006865">
    <property type="term" value="P:amino acid transport"/>
    <property type="evidence" value="ECO:0007669"/>
    <property type="project" value="UniProtKB-KW"/>
</dbReference>
<dbReference type="Gene3D" id="1.20.1740.10">
    <property type="entry name" value="Amino acid/polyamine transporter I"/>
    <property type="match status" value="1"/>
</dbReference>
<dbReference type="InterPro" id="IPR002293">
    <property type="entry name" value="AA/rel_permease1"/>
</dbReference>
<dbReference type="InterPro" id="IPR004754">
    <property type="entry name" value="Amino_acid_antiprt"/>
</dbReference>
<dbReference type="InterPro" id="IPR050367">
    <property type="entry name" value="APC_superfamily"/>
</dbReference>
<dbReference type="NCBIfam" id="TIGR00905">
    <property type="entry name" value="2A0302"/>
    <property type="match status" value="1"/>
</dbReference>
<dbReference type="PANTHER" id="PTHR42770">
    <property type="entry name" value="AMINO ACID TRANSPORTER-RELATED"/>
    <property type="match status" value="1"/>
</dbReference>
<dbReference type="PANTHER" id="PTHR42770:SF4">
    <property type="entry name" value="ARGININE_ORNITHINE ANTIPORTER-RELATED"/>
    <property type="match status" value="1"/>
</dbReference>
<dbReference type="Pfam" id="PF13520">
    <property type="entry name" value="AA_permease_2"/>
    <property type="match status" value="1"/>
</dbReference>
<dbReference type="PIRSF" id="PIRSF006060">
    <property type="entry name" value="AA_transporter"/>
    <property type="match status" value="1"/>
</dbReference>
<feature type="chain" id="PRO_0000363178" description="Arginine/agmatine antiporter">
    <location>
        <begin position="1"/>
        <end position="483"/>
    </location>
</feature>
<feature type="transmembrane region" description="Helical" evidence="2">
    <location>
        <begin position="9"/>
        <end position="31"/>
    </location>
</feature>
<feature type="transmembrane region" description="Helical" evidence="2">
    <location>
        <begin position="46"/>
        <end position="64"/>
    </location>
</feature>
<feature type="transmembrane region" description="Helical" evidence="2">
    <location>
        <begin position="85"/>
        <end position="107"/>
    </location>
</feature>
<feature type="transmembrane region" description="Helical" evidence="2">
    <location>
        <begin position="127"/>
        <end position="149"/>
    </location>
</feature>
<feature type="transmembrane region" description="Helical" evidence="2">
    <location>
        <begin position="156"/>
        <end position="178"/>
    </location>
</feature>
<feature type="transmembrane region" description="Helical" evidence="2">
    <location>
        <begin position="209"/>
        <end position="228"/>
    </location>
</feature>
<feature type="transmembrane region" description="Helical" evidence="2">
    <location>
        <begin position="241"/>
        <end position="263"/>
    </location>
</feature>
<feature type="transmembrane region" description="Helical" evidence="2">
    <location>
        <begin position="293"/>
        <end position="315"/>
    </location>
</feature>
<feature type="transmembrane region" description="Helical" evidence="2">
    <location>
        <begin position="335"/>
        <end position="357"/>
    </location>
</feature>
<feature type="transmembrane region" description="Helical" evidence="2">
    <location>
        <begin position="367"/>
        <end position="389"/>
    </location>
</feature>
<feature type="transmembrane region" description="Helical" evidence="2">
    <location>
        <begin position="415"/>
        <end position="435"/>
    </location>
</feature>
<feature type="transmembrane region" description="Helical" evidence="2">
    <location>
        <begin position="458"/>
        <end position="477"/>
    </location>
</feature>
<comment type="function">
    <text evidence="1">Catalyzes the exchange of L-arginine for agmatine. The arginine uptake by the bacterium in the macrophage may be a virulence factor against the host innate immune response (By similarity).</text>
</comment>
<comment type="subcellular location">
    <subcellularLocation>
        <location evidence="1">Cell inner membrane</location>
        <topology evidence="1">Multi-pass membrane protein</topology>
    </subcellularLocation>
</comment>
<comment type="similarity">
    <text evidence="3">Belongs to the amino acid-polyamine-organocation (APC) superfamily. Basic amino acid/polyamine antiporter (APA) (TC 2.A.3.2) family.</text>
</comment>
<reference key="1">
    <citation type="journal article" date="1998" name="Science">
        <title>Genome sequence of an obligate intracellular pathogen of humans: Chlamydia trachomatis.</title>
        <authorList>
            <person name="Stephens R.S."/>
            <person name="Kalman S."/>
            <person name="Lammel C.J."/>
            <person name="Fan J."/>
            <person name="Marathe R."/>
            <person name="Aravind L."/>
            <person name="Mitchell W.P."/>
            <person name="Olinger L."/>
            <person name="Tatusov R.L."/>
            <person name="Zhao Q."/>
            <person name="Koonin E.V."/>
            <person name="Davis R.W."/>
        </authorList>
    </citation>
    <scope>NUCLEOTIDE SEQUENCE [LARGE SCALE GENOMIC DNA]</scope>
    <source>
        <strain>ATCC VR-885 / DSM 19411 / UW-3/Cx</strain>
    </source>
</reference>